<gene>
    <name type="ordered locus">NT01EI_2577</name>
</gene>
<accession>C5BG23</accession>
<reference key="1">
    <citation type="submission" date="2009-03" db="EMBL/GenBank/DDBJ databases">
        <title>Complete genome sequence of Edwardsiella ictaluri 93-146.</title>
        <authorList>
            <person name="Williams M.L."/>
            <person name="Gillaspy A.F."/>
            <person name="Dyer D.W."/>
            <person name="Thune R.L."/>
            <person name="Waldbieser G.C."/>
            <person name="Schuster S.C."/>
            <person name="Gipson J."/>
            <person name="Zaitshik J."/>
            <person name="Landry C."/>
            <person name="Lawrence M.L."/>
        </authorList>
    </citation>
    <scope>NUCLEOTIDE SEQUENCE [LARGE SCALE GENOMIC DNA]</scope>
    <source>
        <strain>93-146</strain>
    </source>
</reference>
<feature type="chain" id="PRO_1000212386" description="Elongation factor P-like protein">
    <location>
        <begin position="1"/>
        <end position="190"/>
    </location>
</feature>
<comment type="similarity">
    <text evidence="1">Belongs to the elongation factor P family.</text>
</comment>
<organism>
    <name type="scientific">Edwardsiella ictaluri (strain 93-146)</name>
    <dbReference type="NCBI Taxonomy" id="634503"/>
    <lineage>
        <taxon>Bacteria</taxon>
        <taxon>Pseudomonadati</taxon>
        <taxon>Pseudomonadota</taxon>
        <taxon>Gammaproteobacteria</taxon>
        <taxon>Enterobacterales</taxon>
        <taxon>Hafniaceae</taxon>
        <taxon>Edwardsiella</taxon>
    </lineage>
</organism>
<protein>
    <recommendedName>
        <fullName evidence="1">Elongation factor P-like protein</fullName>
    </recommendedName>
</protein>
<name>EFPL_EDWI9</name>
<sequence>MARANEIKRGMAVNYNGKLLLVRDIDIQSPSARGAATLYKMRFSDVRTGLKVEERFKGDDLLETITLSRRPVTFSYIDGDEYVFMDDEDYTPYTFKKEQIEDELLFIPEGGIPGMQVLTMEGQVLALELPQTVDMEIVETTPSIKGASASARTKPAAMSTGLVVQVPEYLSSGEKIRIHVEERRFMGRAD</sequence>
<proteinExistence type="inferred from homology"/>
<evidence type="ECO:0000255" key="1">
    <source>
        <dbReference type="HAMAP-Rule" id="MF_00646"/>
    </source>
</evidence>
<dbReference type="EMBL" id="CP001600">
    <property type="protein sequence ID" value="ACR69746.1"/>
    <property type="molecule type" value="Genomic_DNA"/>
</dbReference>
<dbReference type="SMR" id="C5BG23"/>
<dbReference type="STRING" id="67780.B6E78_04945"/>
<dbReference type="KEGG" id="eic:NT01EI_2577"/>
<dbReference type="HOGENOM" id="CLU_074944_2_0_6"/>
<dbReference type="OrthoDB" id="5599402at2"/>
<dbReference type="Proteomes" id="UP000001485">
    <property type="component" value="Chromosome"/>
</dbReference>
<dbReference type="GO" id="GO:0005737">
    <property type="term" value="C:cytoplasm"/>
    <property type="evidence" value="ECO:0007669"/>
    <property type="project" value="InterPro"/>
</dbReference>
<dbReference type="GO" id="GO:0003746">
    <property type="term" value="F:translation elongation factor activity"/>
    <property type="evidence" value="ECO:0007669"/>
    <property type="project" value="UniProtKB-UniRule"/>
</dbReference>
<dbReference type="GO" id="GO:0043043">
    <property type="term" value="P:peptide biosynthetic process"/>
    <property type="evidence" value="ECO:0007669"/>
    <property type="project" value="InterPro"/>
</dbReference>
<dbReference type="CDD" id="cd04470">
    <property type="entry name" value="S1_EF-P_repeat_1"/>
    <property type="match status" value="1"/>
</dbReference>
<dbReference type="CDD" id="cd05794">
    <property type="entry name" value="S1_EF-P_repeat_2"/>
    <property type="match status" value="1"/>
</dbReference>
<dbReference type="FunFam" id="2.40.50.140:FF:000004">
    <property type="entry name" value="Elongation factor P"/>
    <property type="match status" value="1"/>
</dbReference>
<dbReference type="FunFam" id="2.30.30.30:FF:000011">
    <property type="entry name" value="Elongation factor P-like protein"/>
    <property type="match status" value="1"/>
</dbReference>
<dbReference type="FunFam" id="2.40.50.140:FF:000053">
    <property type="entry name" value="Elongation factor P-like protein"/>
    <property type="match status" value="1"/>
</dbReference>
<dbReference type="Gene3D" id="2.30.30.30">
    <property type="match status" value="1"/>
</dbReference>
<dbReference type="Gene3D" id="2.40.50.140">
    <property type="entry name" value="Nucleic acid-binding proteins"/>
    <property type="match status" value="2"/>
</dbReference>
<dbReference type="HAMAP" id="MF_00646">
    <property type="entry name" value="EFP"/>
    <property type="match status" value="1"/>
</dbReference>
<dbReference type="InterPro" id="IPR015365">
    <property type="entry name" value="Elong-fact-P_C"/>
</dbReference>
<dbReference type="InterPro" id="IPR012340">
    <property type="entry name" value="NA-bd_OB-fold"/>
</dbReference>
<dbReference type="InterPro" id="IPR014722">
    <property type="entry name" value="Rib_uL2_dom2"/>
</dbReference>
<dbReference type="InterPro" id="IPR020599">
    <property type="entry name" value="Transl_elong_fac_P/YeiP"/>
</dbReference>
<dbReference type="InterPro" id="IPR013185">
    <property type="entry name" value="Transl_elong_KOW-like"/>
</dbReference>
<dbReference type="InterPro" id="IPR011897">
    <property type="entry name" value="Transl_elong_p-like_YeiP"/>
</dbReference>
<dbReference type="InterPro" id="IPR001059">
    <property type="entry name" value="Transl_elong_P/YeiP_cen"/>
</dbReference>
<dbReference type="InterPro" id="IPR013852">
    <property type="entry name" value="Transl_elong_P/YeiP_CS"/>
</dbReference>
<dbReference type="InterPro" id="IPR008991">
    <property type="entry name" value="Translation_prot_SH3-like_sf"/>
</dbReference>
<dbReference type="NCBIfam" id="NF001810">
    <property type="entry name" value="PRK00529.1"/>
    <property type="match status" value="1"/>
</dbReference>
<dbReference type="NCBIfam" id="NF003392">
    <property type="entry name" value="PRK04542.1"/>
    <property type="match status" value="1"/>
</dbReference>
<dbReference type="NCBIfam" id="TIGR02178">
    <property type="entry name" value="yeiP"/>
    <property type="match status" value="1"/>
</dbReference>
<dbReference type="PANTHER" id="PTHR30053">
    <property type="entry name" value="ELONGATION FACTOR P"/>
    <property type="match status" value="1"/>
</dbReference>
<dbReference type="PANTHER" id="PTHR30053:SF14">
    <property type="entry name" value="TRANSLATION ELONGATION FACTOR KOW-LIKE DOMAIN-CONTAINING PROTEIN"/>
    <property type="match status" value="1"/>
</dbReference>
<dbReference type="Pfam" id="PF01132">
    <property type="entry name" value="EFP"/>
    <property type="match status" value="1"/>
</dbReference>
<dbReference type="Pfam" id="PF08207">
    <property type="entry name" value="EFP_N"/>
    <property type="match status" value="1"/>
</dbReference>
<dbReference type="Pfam" id="PF09285">
    <property type="entry name" value="Elong-fact-P_C"/>
    <property type="match status" value="1"/>
</dbReference>
<dbReference type="PIRSF" id="PIRSF005901">
    <property type="entry name" value="EF-P"/>
    <property type="match status" value="1"/>
</dbReference>
<dbReference type="SMART" id="SM01185">
    <property type="entry name" value="EFP"/>
    <property type="match status" value="1"/>
</dbReference>
<dbReference type="SMART" id="SM00841">
    <property type="entry name" value="Elong-fact-P_C"/>
    <property type="match status" value="1"/>
</dbReference>
<dbReference type="SUPFAM" id="SSF50249">
    <property type="entry name" value="Nucleic acid-binding proteins"/>
    <property type="match status" value="2"/>
</dbReference>
<dbReference type="SUPFAM" id="SSF50104">
    <property type="entry name" value="Translation proteins SH3-like domain"/>
    <property type="match status" value="1"/>
</dbReference>
<dbReference type="PROSITE" id="PS01275">
    <property type="entry name" value="EFP"/>
    <property type="match status" value="1"/>
</dbReference>